<proteinExistence type="predicted"/>
<sequence>MDKITGFSDDELLVKILSFLPTKAAVTTSILSKQWKFLWMRLPKLEYHDDIKIYILYMRGGSRSRTDSILLEKSQRMWRFIDKNLPLHSSPVIESLRLTIYNELFQPESINLWVEIAVSRCVKELSVRFSPFKGKRDALLPTTLYTCKSLVTLKLRENILVDVPHVFCLPSLKTLHLSHVTYADEESLQRLLSNCFVLEDLVVERRVGDNVRNFAVIIPSLLSLSFEILGQCSSEEYVIHTPSLKYFKARDFGECSTCLILNMPKLEEVFVSTAGHNIKKLLESVTYVKRLSLFIPDNNAEAFTALYGDVIVFNQLEHLTFIIWEAYCSKLLYWLLIASPKLRNLEFNDQFSSDGMDTLVFWEQMITSVPQCLLSSLQTFKWLGNGDSIEGKDLATFILRNSCQLKTATISIGQGQNKLEIEKELLLHQNMDKISGISDDVLLVKILSFRPTKVAVSTSVLSKQWKYLRKRVLKLEYDDTECKTKPSKSSHKRFRCFVKRFCK</sequence>
<keyword id="KW-1185">Reference proteome</keyword>
<accession>Q9FM90</accession>
<dbReference type="EMBL" id="AB009049">
    <property type="protein sequence ID" value="BAB11269.1"/>
    <property type="molecule type" value="Genomic_DNA"/>
</dbReference>
<dbReference type="EMBL" id="CP002688">
    <property type="protein sequence ID" value="AED96761.1"/>
    <property type="molecule type" value="Genomic_DNA"/>
</dbReference>
<dbReference type="RefSeq" id="NP_200452.1">
    <property type="nucleotide sequence ID" value="NM_125024.1"/>
</dbReference>
<dbReference type="STRING" id="3702.Q9FM90"/>
<dbReference type="PaxDb" id="3702-AT5G56410.1"/>
<dbReference type="ProteomicsDB" id="230688"/>
<dbReference type="EnsemblPlants" id="AT5G56410.1">
    <property type="protein sequence ID" value="AT5G56410.1"/>
    <property type="gene ID" value="AT5G56410"/>
</dbReference>
<dbReference type="GeneID" id="835742"/>
<dbReference type="Gramene" id="AT5G56410.1">
    <property type="protein sequence ID" value="AT5G56410.1"/>
    <property type="gene ID" value="AT5G56410"/>
</dbReference>
<dbReference type="KEGG" id="ath:AT5G56410"/>
<dbReference type="Araport" id="AT5G56410"/>
<dbReference type="TAIR" id="AT5G56410"/>
<dbReference type="HOGENOM" id="CLU_010721_1_2_1"/>
<dbReference type="InParanoid" id="Q9FM90"/>
<dbReference type="OMA" id="EYDDTEC"/>
<dbReference type="PhylomeDB" id="Q9FM90"/>
<dbReference type="PRO" id="PR:Q9FM90"/>
<dbReference type="Proteomes" id="UP000006548">
    <property type="component" value="Chromosome 5"/>
</dbReference>
<dbReference type="ExpressionAtlas" id="Q9FM90">
    <property type="expression patterns" value="baseline and differential"/>
</dbReference>
<dbReference type="CDD" id="cd22160">
    <property type="entry name" value="F-box_AtFBL13-like"/>
    <property type="match status" value="1"/>
</dbReference>
<dbReference type="Gene3D" id="3.80.10.10">
    <property type="entry name" value="Ribonuclease Inhibitor"/>
    <property type="match status" value="1"/>
</dbReference>
<dbReference type="InterPro" id="IPR036047">
    <property type="entry name" value="F-box-like_dom_sf"/>
</dbReference>
<dbReference type="InterPro" id="IPR053781">
    <property type="entry name" value="F-box_AtFBL13-like"/>
</dbReference>
<dbReference type="InterPro" id="IPR001810">
    <property type="entry name" value="F-box_dom"/>
</dbReference>
<dbReference type="InterPro" id="IPR006566">
    <property type="entry name" value="FBD"/>
</dbReference>
<dbReference type="InterPro" id="IPR050232">
    <property type="entry name" value="FBL13/AtMIF1-like"/>
</dbReference>
<dbReference type="InterPro" id="IPR032675">
    <property type="entry name" value="LRR_dom_sf"/>
</dbReference>
<dbReference type="InterPro" id="IPR055411">
    <property type="entry name" value="LRR_FXL15/At3g58940/PEG3-like"/>
</dbReference>
<dbReference type="PANTHER" id="PTHR31900">
    <property type="entry name" value="F-BOX/RNI SUPERFAMILY PROTEIN-RELATED"/>
    <property type="match status" value="1"/>
</dbReference>
<dbReference type="PANTHER" id="PTHR31900:SF30">
    <property type="entry name" value="SUPERFAMILY PROTEIN, PUTATIVE-RELATED"/>
    <property type="match status" value="1"/>
</dbReference>
<dbReference type="Pfam" id="PF00646">
    <property type="entry name" value="F-box"/>
    <property type="match status" value="1"/>
</dbReference>
<dbReference type="Pfam" id="PF08387">
    <property type="entry name" value="FBD"/>
    <property type="match status" value="1"/>
</dbReference>
<dbReference type="Pfam" id="PF24758">
    <property type="entry name" value="LRR_At5g56370"/>
    <property type="match status" value="1"/>
</dbReference>
<dbReference type="SMART" id="SM00579">
    <property type="entry name" value="FBD"/>
    <property type="match status" value="1"/>
</dbReference>
<dbReference type="SUPFAM" id="SSF81383">
    <property type="entry name" value="F-box domain"/>
    <property type="match status" value="1"/>
</dbReference>
<dbReference type="SUPFAM" id="SSF52047">
    <property type="entry name" value="RNI-like"/>
    <property type="match status" value="1"/>
</dbReference>
<protein>
    <recommendedName>
        <fullName>Putative FBD-associated F-box protein At5g56410</fullName>
    </recommendedName>
</protein>
<organism>
    <name type="scientific">Arabidopsis thaliana</name>
    <name type="common">Mouse-ear cress</name>
    <dbReference type="NCBI Taxonomy" id="3702"/>
    <lineage>
        <taxon>Eukaryota</taxon>
        <taxon>Viridiplantae</taxon>
        <taxon>Streptophyta</taxon>
        <taxon>Embryophyta</taxon>
        <taxon>Tracheophyta</taxon>
        <taxon>Spermatophyta</taxon>
        <taxon>Magnoliopsida</taxon>
        <taxon>eudicotyledons</taxon>
        <taxon>Gunneridae</taxon>
        <taxon>Pentapetalae</taxon>
        <taxon>rosids</taxon>
        <taxon>malvids</taxon>
        <taxon>Brassicales</taxon>
        <taxon>Brassicaceae</taxon>
        <taxon>Camelineae</taxon>
        <taxon>Arabidopsis</taxon>
    </lineage>
</organism>
<gene>
    <name type="ordered locus">At5g56410</name>
    <name type="ORF">MCD7.17</name>
</gene>
<reference key="1">
    <citation type="journal article" date="1998" name="DNA Res.">
        <title>Structural analysis of Arabidopsis thaliana chromosome 5. IV. Sequence features of the regions of 1,456,315 bp covered by nineteen physically assigned P1 and TAC clones.</title>
        <authorList>
            <person name="Sato S."/>
            <person name="Kaneko T."/>
            <person name="Kotani H."/>
            <person name="Nakamura Y."/>
            <person name="Asamizu E."/>
            <person name="Miyajima N."/>
            <person name="Tabata S."/>
        </authorList>
    </citation>
    <scope>NUCLEOTIDE SEQUENCE [LARGE SCALE GENOMIC DNA]</scope>
    <source>
        <strain>cv. Columbia</strain>
    </source>
</reference>
<reference key="2">
    <citation type="journal article" date="2017" name="Plant J.">
        <title>Araport11: a complete reannotation of the Arabidopsis thaliana reference genome.</title>
        <authorList>
            <person name="Cheng C.Y."/>
            <person name="Krishnakumar V."/>
            <person name="Chan A.P."/>
            <person name="Thibaud-Nissen F."/>
            <person name="Schobel S."/>
            <person name="Town C.D."/>
        </authorList>
    </citation>
    <scope>GENOME REANNOTATION</scope>
    <source>
        <strain>cv. Columbia</strain>
    </source>
</reference>
<name>FBD24_ARATH</name>
<feature type="chain" id="PRO_0000283156" description="Putative FBD-associated F-box protein At5g56410">
    <location>
        <begin position="1"/>
        <end position="503"/>
    </location>
</feature>
<feature type="domain" description="F-box">
    <location>
        <begin position="2"/>
        <end position="50"/>
    </location>
</feature>
<feature type="domain" description="FBD">
    <location>
        <begin position="361"/>
        <end position="412"/>
    </location>
</feature>